<sequence>MIDITLPLTDIHRHLDGNIRAQTILDLGRQFNIALPAQTLETLIPHVQVTSTEPDLVSFLTKLDWGVKVLASLDACRRVAFENIEDAARNGLHYVELRFSPGYMAMAHQLPIAGVVEAVIDGVRDGCNTFGVEARLIGIMSRTFGEAACLQELDALLAHRENITALDLAGDELGFPGSLFLSHFNRARDAGWHITVHAGEAAGPESIWQAIRELGAERIGHGVKAVEDRALMDFLVQQRIGIESCLTSNIQTSTVASLADHPLKTFLEHGVLASLNTDDPAVQGVDIIHEYHVAAPAAGLSREQIRQAQINGLEIAFLSDGEKRALREKVAAA</sequence>
<comment type="function">
    <text evidence="1">Catalyzes the hydrolytic deamination of adenosine and 2-deoxyadenosine.</text>
</comment>
<comment type="catalytic activity">
    <reaction evidence="1">
        <text>adenosine + H2O + H(+) = inosine + NH4(+)</text>
        <dbReference type="Rhea" id="RHEA:24408"/>
        <dbReference type="ChEBI" id="CHEBI:15377"/>
        <dbReference type="ChEBI" id="CHEBI:15378"/>
        <dbReference type="ChEBI" id="CHEBI:16335"/>
        <dbReference type="ChEBI" id="CHEBI:17596"/>
        <dbReference type="ChEBI" id="CHEBI:28938"/>
        <dbReference type="EC" id="3.5.4.4"/>
    </reaction>
    <physiologicalReaction direction="left-to-right" evidence="1">
        <dbReference type="Rhea" id="RHEA:24409"/>
    </physiologicalReaction>
</comment>
<comment type="catalytic activity">
    <reaction evidence="1">
        <text>2'-deoxyadenosine + H2O + H(+) = 2'-deoxyinosine + NH4(+)</text>
        <dbReference type="Rhea" id="RHEA:28190"/>
        <dbReference type="ChEBI" id="CHEBI:15377"/>
        <dbReference type="ChEBI" id="CHEBI:15378"/>
        <dbReference type="ChEBI" id="CHEBI:17256"/>
        <dbReference type="ChEBI" id="CHEBI:28938"/>
        <dbReference type="ChEBI" id="CHEBI:28997"/>
        <dbReference type="EC" id="3.5.4.4"/>
    </reaction>
    <physiologicalReaction direction="left-to-right" evidence="1">
        <dbReference type="Rhea" id="RHEA:28191"/>
    </physiologicalReaction>
</comment>
<comment type="cofactor">
    <cofactor evidence="1">
        <name>Zn(2+)</name>
        <dbReference type="ChEBI" id="CHEBI:29105"/>
    </cofactor>
    <text evidence="1">Binds 1 zinc ion per subunit.</text>
</comment>
<comment type="similarity">
    <text evidence="1">Belongs to the metallo-dependent hydrolases superfamily. Adenosine and AMP deaminases family. Adenosine deaminase subfamily.</text>
</comment>
<evidence type="ECO:0000255" key="1">
    <source>
        <dbReference type="HAMAP-Rule" id="MF_00540"/>
    </source>
</evidence>
<gene>
    <name evidence="1" type="primary">add</name>
    <name type="ordered locus">SNSL254_A1573</name>
</gene>
<feature type="chain" id="PRO_1000128865" description="Adenosine deaminase">
    <location>
        <begin position="1"/>
        <end position="333"/>
    </location>
</feature>
<feature type="active site" description="Proton donor" evidence="1">
    <location>
        <position position="200"/>
    </location>
</feature>
<feature type="binding site" evidence="1">
    <location>
        <position position="12"/>
    </location>
    <ligand>
        <name>Zn(2+)</name>
        <dbReference type="ChEBI" id="CHEBI:29105"/>
        <note>catalytic</note>
    </ligand>
</feature>
<feature type="binding site" evidence="1">
    <location>
        <position position="14"/>
    </location>
    <ligand>
        <name>substrate</name>
    </ligand>
</feature>
<feature type="binding site" evidence="1">
    <location>
        <position position="14"/>
    </location>
    <ligand>
        <name>Zn(2+)</name>
        <dbReference type="ChEBI" id="CHEBI:29105"/>
        <note>catalytic</note>
    </ligand>
</feature>
<feature type="binding site" evidence="1">
    <location>
        <position position="16"/>
    </location>
    <ligand>
        <name>substrate</name>
    </ligand>
</feature>
<feature type="binding site" evidence="1">
    <location>
        <position position="170"/>
    </location>
    <ligand>
        <name>substrate</name>
    </ligand>
</feature>
<feature type="binding site" evidence="1">
    <location>
        <position position="197"/>
    </location>
    <ligand>
        <name>Zn(2+)</name>
        <dbReference type="ChEBI" id="CHEBI:29105"/>
        <note>catalytic</note>
    </ligand>
</feature>
<feature type="binding site" evidence="1">
    <location>
        <position position="278"/>
    </location>
    <ligand>
        <name>Zn(2+)</name>
        <dbReference type="ChEBI" id="CHEBI:29105"/>
        <note>catalytic</note>
    </ligand>
</feature>
<feature type="binding site" evidence="1">
    <location>
        <position position="279"/>
    </location>
    <ligand>
        <name>substrate</name>
    </ligand>
</feature>
<feature type="site" description="Important for catalytic activity" evidence="1">
    <location>
        <position position="221"/>
    </location>
</feature>
<dbReference type="EC" id="3.5.4.4" evidence="1"/>
<dbReference type="EMBL" id="CP001113">
    <property type="protein sequence ID" value="ACF61836.1"/>
    <property type="molecule type" value="Genomic_DNA"/>
</dbReference>
<dbReference type="RefSeq" id="WP_000565571.1">
    <property type="nucleotide sequence ID" value="NZ_CCMR01000003.1"/>
</dbReference>
<dbReference type="SMR" id="B4T5A0"/>
<dbReference type="KEGG" id="see:SNSL254_A1573"/>
<dbReference type="HOGENOM" id="CLU_039228_0_2_6"/>
<dbReference type="Proteomes" id="UP000008824">
    <property type="component" value="Chromosome"/>
</dbReference>
<dbReference type="GO" id="GO:0005829">
    <property type="term" value="C:cytosol"/>
    <property type="evidence" value="ECO:0007669"/>
    <property type="project" value="TreeGrafter"/>
</dbReference>
<dbReference type="GO" id="GO:0046936">
    <property type="term" value="F:2'-deoxyadenosine deaminase activity"/>
    <property type="evidence" value="ECO:0007669"/>
    <property type="project" value="RHEA"/>
</dbReference>
<dbReference type="GO" id="GO:0004000">
    <property type="term" value="F:adenosine deaminase activity"/>
    <property type="evidence" value="ECO:0007669"/>
    <property type="project" value="UniProtKB-UniRule"/>
</dbReference>
<dbReference type="GO" id="GO:0008270">
    <property type="term" value="F:zinc ion binding"/>
    <property type="evidence" value="ECO:0007669"/>
    <property type="project" value="UniProtKB-UniRule"/>
</dbReference>
<dbReference type="GO" id="GO:0006154">
    <property type="term" value="P:adenosine catabolic process"/>
    <property type="evidence" value="ECO:0007669"/>
    <property type="project" value="TreeGrafter"/>
</dbReference>
<dbReference type="GO" id="GO:0043103">
    <property type="term" value="P:hypoxanthine salvage"/>
    <property type="evidence" value="ECO:0007669"/>
    <property type="project" value="TreeGrafter"/>
</dbReference>
<dbReference type="GO" id="GO:0046103">
    <property type="term" value="P:inosine biosynthetic process"/>
    <property type="evidence" value="ECO:0007669"/>
    <property type="project" value="TreeGrafter"/>
</dbReference>
<dbReference type="GO" id="GO:0009117">
    <property type="term" value="P:nucleotide metabolic process"/>
    <property type="evidence" value="ECO:0007669"/>
    <property type="project" value="UniProtKB-KW"/>
</dbReference>
<dbReference type="GO" id="GO:0009168">
    <property type="term" value="P:purine ribonucleoside monophosphate biosynthetic process"/>
    <property type="evidence" value="ECO:0007669"/>
    <property type="project" value="UniProtKB-UniRule"/>
</dbReference>
<dbReference type="CDD" id="cd01320">
    <property type="entry name" value="ADA"/>
    <property type="match status" value="1"/>
</dbReference>
<dbReference type="FunFam" id="3.20.20.140:FF:000009">
    <property type="entry name" value="Adenosine deaminase"/>
    <property type="match status" value="1"/>
</dbReference>
<dbReference type="Gene3D" id="3.20.20.140">
    <property type="entry name" value="Metal-dependent hydrolases"/>
    <property type="match status" value="1"/>
</dbReference>
<dbReference type="HAMAP" id="MF_00540">
    <property type="entry name" value="A_deaminase"/>
    <property type="match status" value="1"/>
</dbReference>
<dbReference type="InterPro" id="IPR006650">
    <property type="entry name" value="A/AMP_deam_AS"/>
</dbReference>
<dbReference type="InterPro" id="IPR028893">
    <property type="entry name" value="A_deaminase"/>
</dbReference>
<dbReference type="InterPro" id="IPR001365">
    <property type="entry name" value="A_deaminase_dom"/>
</dbReference>
<dbReference type="InterPro" id="IPR006330">
    <property type="entry name" value="Ado/ade_deaminase"/>
</dbReference>
<dbReference type="InterPro" id="IPR032466">
    <property type="entry name" value="Metal_Hydrolase"/>
</dbReference>
<dbReference type="NCBIfam" id="TIGR01430">
    <property type="entry name" value="aden_deam"/>
    <property type="match status" value="1"/>
</dbReference>
<dbReference type="NCBIfam" id="NF006846">
    <property type="entry name" value="PRK09358.1-1"/>
    <property type="match status" value="1"/>
</dbReference>
<dbReference type="PANTHER" id="PTHR11409">
    <property type="entry name" value="ADENOSINE DEAMINASE"/>
    <property type="match status" value="1"/>
</dbReference>
<dbReference type="PANTHER" id="PTHR11409:SF43">
    <property type="entry name" value="ADENOSINE DEAMINASE"/>
    <property type="match status" value="1"/>
</dbReference>
<dbReference type="Pfam" id="PF00962">
    <property type="entry name" value="A_deaminase"/>
    <property type="match status" value="1"/>
</dbReference>
<dbReference type="SUPFAM" id="SSF51556">
    <property type="entry name" value="Metallo-dependent hydrolases"/>
    <property type="match status" value="1"/>
</dbReference>
<dbReference type="PROSITE" id="PS00485">
    <property type="entry name" value="A_DEAMINASE"/>
    <property type="match status" value="1"/>
</dbReference>
<accession>B4T5A0</accession>
<reference key="1">
    <citation type="journal article" date="2011" name="J. Bacteriol.">
        <title>Comparative genomics of 28 Salmonella enterica isolates: evidence for CRISPR-mediated adaptive sublineage evolution.</title>
        <authorList>
            <person name="Fricke W.F."/>
            <person name="Mammel M.K."/>
            <person name="McDermott P.F."/>
            <person name="Tartera C."/>
            <person name="White D.G."/>
            <person name="Leclerc J.E."/>
            <person name="Ravel J."/>
            <person name="Cebula T.A."/>
        </authorList>
    </citation>
    <scope>NUCLEOTIDE SEQUENCE [LARGE SCALE GENOMIC DNA]</scope>
    <source>
        <strain>SL254</strain>
    </source>
</reference>
<name>ADD_SALNS</name>
<protein>
    <recommendedName>
        <fullName evidence="1">Adenosine deaminase</fullName>
        <ecNumber evidence="1">3.5.4.4</ecNumber>
    </recommendedName>
    <alternativeName>
        <fullName evidence="1">Adenosine aminohydrolase</fullName>
    </alternativeName>
</protein>
<proteinExistence type="inferred from homology"/>
<keyword id="KW-0378">Hydrolase</keyword>
<keyword id="KW-0479">Metal-binding</keyword>
<keyword id="KW-0546">Nucleotide metabolism</keyword>
<keyword id="KW-0862">Zinc</keyword>
<organism>
    <name type="scientific">Salmonella newport (strain SL254)</name>
    <dbReference type="NCBI Taxonomy" id="423368"/>
    <lineage>
        <taxon>Bacteria</taxon>
        <taxon>Pseudomonadati</taxon>
        <taxon>Pseudomonadota</taxon>
        <taxon>Gammaproteobacteria</taxon>
        <taxon>Enterobacterales</taxon>
        <taxon>Enterobacteriaceae</taxon>
        <taxon>Salmonella</taxon>
    </lineage>
</organism>